<organism>
    <name type="scientific">Yersinia pestis</name>
    <dbReference type="NCBI Taxonomy" id="632"/>
    <lineage>
        <taxon>Bacteria</taxon>
        <taxon>Pseudomonadati</taxon>
        <taxon>Pseudomonadota</taxon>
        <taxon>Gammaproteobacteria</taxon>
        <taxon>Enterobacterales</taxon>
        <taxon>Yersiniaceae</taxon>
        <taxon>Yersinia</taxon>
    </lineage>
</organism>
<keyword id="KW-0114">cAMP</keyword>
<keyword id="KW-0378">Hydrolase</keyword>
<keyword id="KW-0574">Periplasm</keyword>
<keyword id="KW-1185">Reference proteome</keyword>
<keyword id="KW-0732">Signal</keyword>
<sequence>MKYLSIKSASDKIKSGLLKTGVILSFSLFSSLSTAAFEVVALGVDGGVSDGNLTSYLIRNDSQPLYLGLDAGSVLPGIARALEKGHFAAITDAMAAPLTRQGYIFRQSINSYFISHAHLDHVSGLIIGSPDDSKKTIYASADTIDVLRNYYFNWRVWPNFTDSGSGARLGTYRMQVVRPAQSLSLGLTRLTGEMYPLSHDKSPSSMLLISSNNEFFAYFGDTGPDDVEKSKNLDTVWRKLAEKVTQQQLKGMIIEVSYPNDVADNKLFGHMTPTWLLKELKKLEQYSGEGQPLKGLPVVISHIKPSFQQGQDVRKLILSELQQGNDMGIEFILMEQGDSQKFQ</sequence>
<proteinExistence type="inferred from homology"/>
<reference key="1">
    <citation type="journal article" date="2001" name="Nature">
        <title>Genome sequence of Yersinia pestis, the causative agent of plague.</title>
        <authorList>
            <person name="Parkhill J."/>
            <person name="Wren B.W."/>
            <person name="Thomson N.R."/>
            <person name="Titball R.W."/>
            <person name="Holden M.T.G."/>
            <person name="Prentice M.B."/>
            <person name="Sebaihia M."/>
            <person name="James K.D."/>
            <person name="Churcher C.M."/>
            <person name="Mungall K.L."/>
            <person name="Baker S."/>
            <person name="Basham D."/>
            <person name="Bentley S.D."/>
            <person name="Brooks K."/>
            <person name="Cerdeno-Tarraga A.-M."/>
            <person name="Chillingworth T."/>
            <person name="Cronin A."/>
            <person name="Davies R.M."/>
            <person name="Davis P."/>
            <person name="Dougan G."/>
            <person name="Feltwell T."/>
            <person name="Hamlin N."/>
            <person name="Holroyd S."/>
            <person name="Jagels K."/>
            <person name="Karlyshev A.V."/>
            <person name="Leather S."/>
            <person name="Moule S."/>
            <person name="Oyston P.C.F."/>
            <person name="Quail M.A."/>
            <person name="Rutherford K.M."/>
            <person name="Simmonds M."/>
            <person name="Skelton J."/>
            <person name="Stevens K."/>
            <person name="Whitehead S."/>
            <person name="Barrell B.G."/>
        </authorList>
    </citation>
    <scope>NUCLEOTIDE SEQUENCE [LARGE SCALE GENOMIC DNA]</scope>
    <source>
        <strain>CO-92 / Biovar Orientalis</strain>
    </source>
</reference>
<reference key="2">
    <citation type="journal article" date="2002" name="J. Bacteriol.">
        <title>Genome sequence of Yersinia pestis KIM.</title>
        <authorList>
            <person name="Deng W."/>
            <person name="Burland V."/>
            <person name="Plunkett G. III"/>
            <person name="Boutin A."/>
            <person name="Mayhew G.F."/>
            <person name="Liss P."/>
            <person name="Perna N.T."/>
            <person name="Rose D.J."/>
            <person name="Mau B."/>
            <person name="Zhou S."/>
            <person name="Schwartz D.C."/>
            <person name="Fetherston J.D."/>
            <person name="Lindler L.E."/>
            <person name="Brubaker R.R."/>
            <person name="Plano G.V."/>
            <person name="Straley S.C."/>
            <person name="McDonough K.A."/>
            <person name="Nilles M.L."/>
            <person name="Matson J.S."/>
            <person name="Blattner F.R."/>
            <person name="Perry R.D."/>
        </authorList>
    </citation>
    <scope>NUCLEOTIDE SEQUENCE [LARGE SCALE GENOMIC DNA]</scope>
    <source>
        <strain>KIM10+ / Biovar Mediaevalis</strain>
    </source>
</reference>
<reference key="3">
    <citation type="journal article" date="2004" name="DNA Res.">
        <title>Complete genome sequence of Yersinia pestis strain 91001, an isolate avirulent to humans.</title>
        <authorList>
            <person name="Song Y."/>
            <person name="Tong Z."/>
            <person name="Wang J."/>
            <person name="Wang L."/>
            <person name="Guo Z."/>
            <person name="Han Y."/>
            <person name="Zhang J."/>
            <person name="Pei D."/>
            <person name="Zhou D."/>
            <person name="Qin H."/>
            <person name="Pang X."/>
            <person name="Han Y."/>
            <person name="Zhai J."/>
            <person name="Li M."/>
            <person name="Cui B."/>
            <person name="Qi Z."/>
            <person name="Jin L."/>
            <person name="Dai R."/>
            <person name="Chen F."/>
            <person name="Li S."/>
            <person name="Ye C."/>
            <person name="Du Z."/>
            <person name="Lin W."/>
            <person name="Wang J."/>
            <person name="Yu J."/>
            <person name="Yang H."/>
            <person name="Wang J."/>
            <person name="Huang P."/>
            <person name="Yang R."/>
        </authorList>
    </citation>
    <scope>NUCLEOTIDE SEQUENCE [LARGE SCALE GENOMIC DNA]</scope>
    <source>
        <strain>91001 / Biovar Mediaevalis</strain>
    </source>
</reference>
<name>CPDP_YERPE</name>
<evidence type="ECO:0000250" key="1"/>
<evidence type="ECO:0000255" key="2"/>
<evidence type="ECO:0000305" key="3"/>
<protein>
    <recommendedName>
        <fullName>Probable 3',5'-cyclic-nucleotide phosphodiesterase</fullName>
        <shortName>3':5'-CNP</shortName>
        <shortName>PDEase</shortName>
        <ecNumber>3.1.4.17</ecNumber>
    </recommendedName>
</protein>
<dbReference type="EC" id="3.1.4.17"/>
<dbReference type="EMBL" id="AL590842">
    <property type="protein sequence ID" value="CAL21315.1"/>
    <property type="molecule type" value="Genomic_DNA"/>
</dbReference>
<dbReference type="EMBL" id="AE009952">
    <property type="protein sequence ID" value="AAM84845.1"/>
    <property type="status" value="ALT_INIT"/>
    <property type="molecule type" value="Genomic_DNA"/>
</dbReference>
<dbReference type="EMBL" id="AE017042">
    <property type="protein sequence ID" value="AAS62699.1"/>
    <property type="status" value="ALT_INIT"/>
    <property type="molecule type" value="Genomic_DNA"/>
</dbReference>
<dbReference type="PIR" id="AH0328">
    <property type="entry name" value="AH0328"/>
</dbReference>
<dbReference type="RefSeq" id="YP_002347644.1">
    <property type="nucleotide sequence ID" value="NC_003143.1"/>
</dbReference>
<dbReference type="SMR" id="Q8ZD92"/>
<dbReference type="STRING" id="214092.YPO2696"/>
<dbReference type="PaxDb" id="214092-YPO2696"/>
<dbReference type="DNASU" id="1146218"/>
<dbReference type="EnsemblBacteria" id="AAS62699">
    <property type="protein sequence ID" value="AAS62699"/>
    <property type="gene ID" value="YP_2500"/>
</dbReference>
<dbReference type="KEGG" id="ype:YPO2696"/>
<dbReference type="KEGG" id="ypk:y1271"/>
<dbReference type="KEGG" id="ypm:YP_2500"/>
<dbReference type="PATRIC" id="fig|214092.21.peg.3134"/>
<dbReference type="eggNOG" id="COG5212">
    <property type="taxonomic scope" value="Bacteria"/>
</dbReference>
<dbReference type="HOGENOM" id="CLU_016658_2_0_6"/>
<dbReference type="OrthoDB" id="9803916at2"/>
<dbReference type="Proteomes" id="UP000000815">
    <property type="component" value="Chromosome"/>
</dbReference>
<dbReference type="Proteomes" id="UP000001019">
    <property type="component" value="Chromosome"/>
</dbReference>
<dbReference type="Proteomes" id="UP000002490">
    <property type="component" value="Chromosome"/>
</dbReference>
<dbReference type="GO" id="GO:0042597">
    <property type="term" value="C:periplasmic space"/>
    <property type="evidence" value="ECO:0007669"/>
    <property type="project" value="UniProtKB-SubCell"/>
</dbReference>
<dbReference type="GO" id="GO:0004115">
    <property type="term" value="F:3',5'-cyclic-AMP phosphodiesterase activity"/>
    <property type="evidence" value="ECO:0000318"/>
    <property type="project" value="GO_Central"/>
</dbReference>
<dbReference type="GO" id="GO:0047555">
    <property type="term" value="F:3',5'-cyclic-GMP phosphodiesterase activity"/>
    <property type="evidence" value="ECO:0000318"/>
    <property type="project" value="GO_Central"/>
</dbReference>
<dbReference type="GO" id="GO:0006198">
    <property type="term" value="P:cAMP catabolic process"/>
    <property type="evidence" value="ECO:0007669"/>
    <property type="project" value="InterPro"/>
</dbReference>
<dbReference type="GO" id="GO:1902660">
    <property type="term" value="P:negative regulation of glucose mediated signaling pathway"/>
    <property type="evidence" value="ECO:0000318"/>
    <property type="project" value="GO_Central"/>
</dbReference>
<dbReference type="CDD" id="cd07735">
    <property type="entry name" value="class_II_PDE_MBL-fold"/>
    <property type="match status" value="1"/>
</dbReference>
<dbReference type="FunFam" id="3.60.15.10:FF:000064">
    <property type="entry name" value="Probable 3',5'-cyclic-nucleotide phosphodiesterase"/>
    <property type="match status" value="1"/>
</dbReference>
<dbReference type="Gene3D" id="3.60.15.10">
    <property type="entry name" value="Ribonuclease Z/Hydroxyacylglutathione hydrolase-like"/>
    <property type="match status" value="1"/>
</dbReference>
<dbReference type="InterPro" id="IPR024225">
    <property type="entry name" value="cAMP-PdiesteraseII_CS"/>
</dbReference>
<dbReference type="InterPro" id="IPR000396">
    <property type="entry name" value="Pdiesterase2"/>
</dbReference>
<dbReference type="InterPro" id="IPR036866">
    <property type="entry name" value="RibonucZ/Hydroxyglut_hydro"/>
</dbReference>
<dbReference type="PANTHER" id="PTHR28283">
    <property type="entry name" value="3',5'-CYCLIC-NUCLEOTIDE PHOSPHODIESTERASE 1"/>
    <property type="match status" value="1"/>
</dbReference>
<dbReference type="PANTHER" id="PTHR28283:SF1">
    <property type="entry name" value="3',5'-CYCLIC-NUCLEOTIDE PHOSPHODIESTERASE 1"/>
    <property type="match status" value="1"/>
</dbReference>
<dbReference type="Pfam" id="PF02112">
    <property type="entry name" value="PDEase_II"/>
    <property type="match status" value="1"/>
</dbReference>
<dbReference type="PIRSF" id="PIRSF000962">
    <property type="entry name" value="Cyc_nuc_PDEase"/>
    <property type="match status" value="1"/>
</dbReference>
<dbReference type="PRINTS" id="PR00388">
    <property type="entry name" value="PDIESTERASE2"/>
</dbReference>
<dbReference type="SUPFAM" id="SSF56281">
    <property type="entry name" value="Metallo-hydrolase/oxidoreductase"/>
    <property type="match status" value="1"/>
</dbReference>
<dbReference type="PROSITE" id="PS00607">
    <property type="entry name" value="PDEASE_II"/>
    <property type="match status" value="1"/>
</dbReference>
<feature type="signal peptide" evidence="2">
    <location>
        <begin position="1"/>
        <end position="36"/>
    </location>
</feature>
<feature type="chain" id="PRO_0000023355" description="Probable 3',5'-cyclic-nucleotide phosphodiesterase">
    <location>
        <begin position="37"/>
        <end position="343"/>
    </location>
</feature>
<comment type="catalytic activity">
    <reaction>
        <text>a nucleoside 3',5'-cyclic phosphate + H2O = a nucleoside 5'-phosphate + H(+)</text>
        <dbReference type="Rhea" id="RHEA:14653"/>
        <dbReference type="ChEBI" id="CHEBI:15377"/>
        <dbReference type="ChEBI" id="CHEBI:15378"/>
        <dbReference type="ChEBI" id="CHEBI:57867"/>
        <dbReference type="ChEBI" id="CHEBI:58464"/>
        <dbReference type="EC" id="3.1.4.17"/>
    </reaction>
</comment>
<comment type="subcellular location">
    <subcellularLocation>
        <location evidence="1">Periplasm</location>
    </subcellularLocation>
</comment>
<comment type="similarity">
    <text evidence="3">Belongs to the cyclic nucleotide phosphodiesterase class-II family.</text>
</comment>
<comment type="sequence caution" evidence="3">
    <conflict type="erroneous initiation">
        <sequence resource="EMBL-CDS" id="AAM84845"/>
    </conflict>
</comment>
<comment type="sequence caution" evidence="3">
    <conflict type="erroneous initiation">
        <sequence resource="EMBL-CDS" id="AAS62699"/>
    </conflict>
</comment>
<gene>
    <name type="primary">cpdP</name>
    <name type="ordered locus">YPO2696</name>
    <name type="ordered locus">y1271</name>
    <name type="ordered locus">YP_2500</name>
</gene>
<accession>Q8ZD92</accession>
<accession>Q0WDJ4</accession>
<accession>Q8CLI4</accession>